<feature type="chain" id="PRO_0000314139" description="SERTA domain-containing protein 4">
    <location>
        <begin position="1"/>
        <end position="356"/>
    </location>
</feature>
<feature type="domain" description="SERTA" evidence="1">
    <location>
        <begin position="101"/>
        <end position="147"/>
    </location>
</feature>
<feature type="region of interest" description="Disordered" evidence="2">
    <location>
        <begin position="33"/>
        <end position="53"/>
    </location>
</feature>
<feature type="region of interest" description="Disordered" evidence="2">
    <location>
        <begin position="215"/>
        <end position="238"/>
    </location>
</feature>
<feature type="region of interest" description="Disordered" evidence="2">
    <location>
        <begin position="280"/>
        <end position="302"/>
    </location>
</feature>
<feature type="region of interest" description="Disordered" evidence="2">
    <location>
        <begin position="332"/>
        <end position="356"/>
    </location>
</feature>
<feature type="compositionally biased region" description="Low complexity" evidence="2">
    <location>
        <begin position="215"/>
        <end position="232"/>
    </location>
</feature>
<feature type="compositionally biased region" description="Basic and acidic residues" evidence="2">
    <location>
        <begin position="280"/>
        <end position="292"/>
    </location>
</feature>
<reference key="1">
    <citation type="journal article" date="2004" name="Nat. Genet.">
        <title>Complete sequencing and characterization of 21,243 full-length human cDNAs.</title>
        <authorList>
            <person name="Ota T."/>
            <person name="Suzuki Y."/>
            <person name="Nishikawa T."/>
            <person name="Otsuki T."/>
            <person name="Sugiyama T."/>
            <person name="Irie R."/>
            <person name="Wakamatsu A."/>
            <person name="Hayashi K."/>
            <person name="Sato H."/>
            <person name="Nagai K."/>
            <person name="Kimura K."/>
            <person name="Makita H."/>
            <person name="Sekine M."/>
            <person name="Obayashi M."/>
            <person name="Nishi T."/>
            <person name="Shibahara T."/>
            <person name="Tanaka T."/>
            <person name="Ishii S."/>
            <person name="Yamamoto J."/>
            <person name="Saito K."/>
            <person name="Kawai Y."/>
            <person name="Isono Y."/>
            <person name="Nakamura Y."/>
            <person name="Nagahari K."/>
            <person name="Murakami K."/>
            <person name="Yasuda T."/>
            <person name="Iwayanagi T."/>
            <person name="Wagatsuma M."/>
            <person name="Shiratori A."/>
            <person name="Sudo H."/>
            <person name="Hosoiri T."/>
            <person name="Kaku Y."/>
            <person name="Kodaira H."/>
            <person name="Kondo H."/>
            <person name="Sugawara M."/>
            <person name="Takahashi M."/>
            <person name="Kanda K."/>
            <person name="Yokoi T."/>
            <person name="Furuya T."/>
            <person name="Kikkawa E."/>
            <person name="Omura Y."/>
            <person name="Abe K."/>
            <person name="Kamihara K."/>
            <person name="Katsuta N."/>
            <person name="Sato K."/>
            <person name="Tanikawa M."/>
            <person name="Yamazaki M."/>
            <person name="Ninomiya K."/>
            <person name="Ishibashi T."/>
            <person name="Yamashita H."/>
            <person name="Murakawa K."/>
            <person name="Fujimori K."/>
            <person name="Tanai H."/>
            <person name="Kimata M."/>
            <person name="Watanabe M."/>
            <person name="Hiraoka S."/>
            <person name="Chiba Y."/>
            <person name="Ishida S."/>
            <person name="Ono Y."/>
            <person name="Takiguchi S."/>
            <person name="Watanabe S."/>
            <person name="Yosida M."/>
            <person name="Hotuta T."/>
            <person name="Kusano J."/>
            <person name="Kanehori K."/>
            <person name="Takahashi-Fujii A."/>
            <person name="Hara H."/>
            <person name="Tanase T.-O."/>
            <person name="Nomura Y."/>
            <person name="Togiya S."/>
            <person name="Komai F."/>
            <person name="Hara R."/>
            <person name="Takeuchi K."/>
            <person name="Arita M."/>
            <person name="Imose N."/>
            <person name="Musashino K."/>
            <person name="Yuuki H."/>
            <person name="Oshima A."/>
            <person name="Sasaki N."/>
            <person name="Aotsuka S."/>
            <person name="Yoshikawa Y."/>
            <person name="Matsunawa H."/>
            <person name="Ichihara T."/>
            <person name="Shiohata N."/>
            <person name="Sano S."/>
            <person name="Moriya S."/>
            <person name="Momiyama H."/>
            <person name="Satoh N."/>
            <person name="Takami S."/>
            <person name="Terashima Y."/>
            <person name="Suzuki O."/>
            <person name="Nakagawa S."/>
            <person name="Senoh A."/>
            <person name="Mizoguchi H."/>
            <person name="Goto Y."/>
            <person name="Shimizu F."/>
            <person name="Wakebe H."/>
            <person name="Hishigaki H."/>
            <person name="Watanabe T."/>
            <person name="Sugiyama A."/>
            <person name="Takemoto M."/>
            <person name="Kawakami B."/>
            <person name="Yamazaki M."/>
            <person name="Watanabe K."/>
            <person name="Kumagai A."/>
            <person name="Itakura S."/>
            <person name="Fukuzumi Y."/>
            <person name="Fujimori Y."/>
            <person name="Komiyama M."/>
            <person name="Tashiro H."/>
            <person name="Tanigami A."/>
            <person name="Fujiwara T."/>
            <person name="Ono T."/>
            <person name="Yamada K."/>
            <person name="Fujii Y."/>
            <person name="Ozaki K."/>
            <person name="Hirao M."/>
            <person name="Ohmori Y."/>
            <person name="Kawabata A."/>
            <person name="Hikiji T."/>
            <person name="Kobatake N."/>
            <person name="Inagaki H."/>
            <person name="Ikema Y."/>
            <person name="Okamoto S."/>
            <person name="Okitani R."/>
            <person name="Kawakami T."/>
            <person name="Noguchi S."/>
            <person name="Itoh T."/>
            <person name="Shigeta K."/>
            <person name="Senba T."/>
            <person name="Matsumura K."/>
            <person name="Nakajima Y."/>
            <person name="Mizuno T."/>
            <person name="Morinaga M."/>
            <person name="Sasaki M."/>
            <person name="Togashi T."/>
            <person name="Oyama M."/>
            <person name="Hata H."/>
            <person name="Watanabe M."/>
            <person name="Komatsu T."/>
            <person name="Mizushima-Sugano J."/>
            <person name="Satoh T."/>
            <person name="Shirai Y."/>
            <person name="Takahashi Y."/>
            <person name="Nakagawa K."/>
            <person name="Okumura K."/>
            <person name="Nagase T."/>
            <person name="Nomura N."/>
            <person name="Kikuchi H."/>
            <person name="Masuho Y."/>
            <person name="Yamashita R."/>
            <person name="Nakai K."/>
            <person name="Yada T."/>
            <person name="Nakamura Y."/>
            <person name="Ohara O."/>
            <person name="Isogai T."/>
            <person name="Sugano S."/>
        </authorList>
    </citation>
    <scope>NUCLEOTIDE SEQUENCE [LARGE SCALE MRNA]</scope>
    <source>
        <tissue>Corpus callosum</tissue>
    </source>
</reference>
<reference key="2">
    <citation type="journal article" date="2006" name="Nature">
        <title>The DNA sequence and biological annotation of human chromosome 1.</title>
        <authorList>
            <person name="Gregory S.G."/>
            <person name="Barlow K.F."/>
            <person name="McLay K.E."/>
            <person name="Kaul R."/>
            <person name="Swarbreck D."/>
            <person name="Dunham A."/>
            <person name="Scott C.E."/>
            <person name="Howe K.L."/>
            <person name="Woodfine K."/>
            <person name="Spencer C.C.A."/>
            <person name="Jones M.C."/>
            <person name="Gillson C."/>
            <person name="Searle S."/>
            <person name="Zhou Y."/>
            <person name="Kokocinski F."/>
            <person name="McDonald L."/>
            <person name="Evans R."/>
            <person name="Phillips K."/>
            <person name="Atkinson A."/>
            <person name="Cooper R."/>
            <person name="Jones C."/>
            <person name="Hall R.E."/>
            <person name="Andrews T.D."/>
            <person name="Lloyd C."/>
            <person name="Ainscough R."/>
            <person name="Almeida J.P."/>
            <person name="Ambrose K.D."/>
            <person name="Anderson F."/>
            <person name="Andrew R.W."/>
            <person name="Ashwell R.I.S."/>
            <person name="Aubin K."/>
            <person name="Babbage A.K."/>
            <person name="Bagguley C.L."/>
            <person name="Bailey J."/>
            <person name="Beasley H."/>
            <person name="Bethel G."/>
            <person name="Bird C.P."/>
            <person name="Bray-Allen S."/>
            <person name="Brown J.Y."/>
            <person name="Brown A.J."/>
            <person name="Buckley D."/>
            <person name="Burton J."/>
            <person name="Bye J."/>
            <person name="Carder C."/>
            <person name="Chapman J.C."/>
            <person name="Clark S.Y."/>
            <person name="Clarke G."/>
            <person name="Clee C."/>
            <person name="Cobley V."/>
            <person name="Collier R.E."/>
            <person name="Corby N."/>
            <person name="Coville G.J."/>
            <person name="Davies J."/>
            <person name="Deadman R."/>
            <person name="Dunn M."/>
            <person name="Earthrowl M."/>
            <person name="Ellington A.G."/>
            <person name="Errington H."/>
            <person name="Frankish A."/>
            <person name="Frankland J."/>
            <person name="French L."/>
            <person name="Garner P."/>
            <person name="Garnett J."/>
            <person name="Gay L."/>
            <person name="Ghori M.R.J."/>
            <person name="Gibson R."/>
            <person name="Gilby L.M."/>
            <person name="Gillett W."/>
            <person name="Glithero R.J."/>
            <person name="Grafham D.V."/>
            <person name="Griffiths C."/>
            <person name="Griffiths-Jones S."/>
            <person name="Grocock R."/>
            <person name="Hammond S."/>
            <person name="Harrison E.S.I."/>
            <person name="Hart E."/>
            <person name="Haugen E."/>
            <person name="Heath P.D."/>
            <person name="Holmes S."/>
            <person name="Holt K."/>
            <person name="Howden P.J."/>
            <person name="Hunt A.R."/>
            <person name="Hunt S.E."/>
            <person name="Hunter G."/>
            <person name="Isherwood J."/>
            <person name="James R."/>
            <person name="Johnson C."/>
            <person name="Johnson D."/>
            <person name="Joy A."/>
            <person name="Kay M."/>
            <person name="Kershaw J.K."/>
            <person name="Kibukawa M."/>
            <person name="Kimberley A.M."/>
            <person name="King A."/>
            <person name="Knights A.J."/>
            <person name="Lad H."/>
            <person name="Laird G."/>
            <person name="Lawlor S."/>
            <person name="Leongamornlert D.A."/>
            <person name="Lloyd D.M."/>
            <person name="Loveland J."/>
            <person name="Lovell J."/>
            <person name="Lush M.J."/>
            <person name="Lyne R."/>
            <person name="Martin S."/>
            <person name="Mashreghi-Mohammadi M."/>
            <person name="Matthews L."/>
            <person name="Matthews N.S.W."/>
            <person name="McLaren S."/>
            <person name="Milne S."/>
            <person name="Mistry S."/>
            <person name="Moore M.J.F."/>
            <person name="Nickerson T."/>
            <person name="O'Dell C.N."/>
            <person name="Oliver K."/>
            <person name="Palmeiri A."/>
            <person name="Palmer S.A."/>
            <person name="Parker A."/>
            <person name="Patel D."/>
            <person name="Pearce A.V."/>
            <person name="Peck A.I."/>
            <person name="Pelan S."/>
            <person name="Phelps K."/>
            <person name="Phillimore B.J."/>
            <person name="Plumb R."/>
            <person name="Rajan J."/>
            <person name="Raymond C."/>
            <person name="Rouse G."/>
            <person name="Saenphimmachak C."/>
            <person name="Sehra H.K."/>
            <person name="Sheridan E."/>
            <person name="Shownkeen R."/>
            <person name="Sims S."/>
            <person name="Skuce C.D."/>
            <person name="Smith M."/>
            <person name="Steward C."/>
            <person name="Subramanian S."/>
            <person name="Sycamore N."/>
            <person name="Tracey A."/>
            <person name="Tromans A."/>
            <person name="Van Helmond Z."/>
            <person name="Wall M."/>
            <person name="Wallis J.M."/>
            <person name="White S."/>
            <person name="Whitehead S.L."/>
            <person name="Wilkinson J.E."/>
            <person name="Willey D.L."/>
            <person name="Williams H."/>
            <person name="Wilming L."/>
            <person name="Wray P.W."/>
            <person name="Wu Z."/>
            <person name="Coulson A."/>
            <person name="Vaudin M."/>
            <person name="Sulston J.E."/>
            <person name="Durbin R.M."/>
            <person name="Hubbard T."/>
            <person name="Wooster R."/>
            <person name="Dunham I."/>
            <person name="Carter N.P."/>
            <person name="McVean G."/>
            <person name="Ross M.T."/>
            <person name="Harrow J."/>
            <person name="Olson M.V."/>
            <person name="Beck S."/>
            <person name="Rogers J."/>
            <person name="Bentley D.R."/>
        </authorList>
    </citation>
    <scope>NUCLEOTIDE SEQUENCE [LARGE SCALE GENOMIC DNA]</scope>
</reference>
<reference key="3">
    <citation type="journal article" date="2004" name="Genome Res.">
        <title>The status, quality, and expansion of the NIH full-length cDNA project: the Mammalian Gene Collection (MGC).</title>
        <authorList>
            <consortium name="The MGC Project Team"/>
        </authorList>
    </citation>
    <scope>NUCLEOTIDE SEQUENCE [LARGE SCALE MRNA]</scope>
    <source>
        <tissue>Kidney</tissue>
    </source>
</reference>
<proteinExistence type="evidence at protein level"/>
<accession>Q9NUC0</accession>
<accession>B2RD32</accession>
<organism>
    <name type="scientific">Homo sapiens</name>
    <name type="common">Human</name>
    <dbReference type="NCBI Taxonomy" id="9606"/>
    <lineage>
        <taxon>Eukaryota</taxon>
        <taxon>Metazoa</taxon>
        <taxon>Chordata</taxon>
        <taxon>Craniata</taxon>
        <taxon>Vertebrata</taxon>
        <taxon>Euteleostomi</taxon>
        <taxon>Mammalia</taxon>
        <taxon>Eutheria</taxon>
        <taxon>Euarchontoglires</taxon>
        <taxon>Primates</taxon>
        <taxon>Haplorrhini</taxon>
        <taxon>Catarrhini</taxon>
        <taxon>Hominidae</taxon>
        <taxon>Homo</taxon>
    </lineage>
</organism>
<gene>
    <name type="primary">SERTAD4</name>
</gene>
<evidence type="ECO:0000255" key="1">
    <source>
        <dbReference type="PROSITE-ProRule" id="PRU00396"/>
    </source>
</evidence>
<evidence type="ECO:0000256" key="2">
    <source>
        <dbReference type="SAM" id="MobiDB-lite"/>
    </source>
</evidence>
<protein>
    <recommendedName>
        <fullName>SERTA domain-containing protein 4</fullName>
    </recommendedName>
</protein>
<dbReference type="EMBL" id="AK315386">
    <property type="protein sequence ID" value="BAG37779.1"/>
    <property type="molecule type" value="mRNA"/>
</dbReference>
<dbReference type="EMBL" id="AL035414">
    <property type="status" value="NOT_ANNOTATED_CDS"/>
    <property type="molecule type" value="Genomic_DNA"/>
</dbReference>
<dbReference type="EMBL" id="CH471100">
    <property type="protein sequence ID" value="EAW93433.1"/>
    <property type="molecule type" value="Genomic_DNA"/>
</dbReference>
<dbReference type="EMBL" id="BC012083">
    <property type="protein sequence ID" value="AAH12083.1"/>
    <property type="molecule type" value="mRNA"/>
</dbReference>
<dbReference type="CCDS" id="CCDS1494.1"/>
<dbReference type="RefSeq" id="NP_001362357.1">
    <property type="nucleotide sequence ID" value="NM_001375428.1"/>
</dbReference>
<dbReference type="RefSeq" id="NP_062551.1">
    <property type="nucleotide sequence ID" value="NM_019605.5"/>
</dbReference>
<dbReference type="BioGRID" id="121121">
    <property type="interactions" value="19"/>
</dbReference>
<dbReference type="FunCoup" id="Q9NUC0">
    <property type="interactions" value="92"/>
</dbReference>
<dbReference type="IntAct" id="Q9NUC0">
    <property type="interactions" value="19"/>
</dbReference>
<dbReference type="STRING" id="9606.ENSP00000355979"/>
<dbReference type="iPTMnet" id="Q9NUC0"/>
<dbReference type="PhosphoSitePlus" id="Q9NUC0"/>
<dbReference type="BioMuta" id="SERTAD4"/>
<dbReference type="DMDM" id="74752974"/>
<dbReference type="jPOST" id="Q9NUC0"/>
<dbReference type="MassIVE" id="Q9NUC0"/>
<dbReference type="PaxDb" id="9606-ENSP00000355979"/>
<dbReference type="PeptideAtlas" id="Q9NUC0"/>
<dbReference type="Pumba" id="Q9NUC0"/>
<dbReference type="Antibodypedia" id="34600">
    <property type="antibodies" value="88 antibodies from 18 providers"/>
</dbReference>
<dbReference type="DNASU" id="56256"/>
<dbReference type="Ensembl" id="ENST00000367012.4">
    <property type="protein sequence ID" value="ENSP00000355979.3"/>
    <property type="gene ID" value="ENSG00000082497.12"/>
</dbReference>
<dbReference type="Ensembl" id="ENST00000630425.2">
    <property type="protein sequence ID" value="ENSP00000486369.1"/>
    <property type="gene ID" value="ENSG00000281230.3"/>
</dbReference>
<dbReference type="GeneID" id="56256"/>
<dbReference type="KEGG" id="hsa:56256"/>
<dbReference type="MANE-Select" id="ENST00000367012.4">
    <property type="protein sequence ID" value="ENSP00000355979.3"/>
    <property type="RefSeq nucleotide sequence ID" value="NM_019605.5"/>
    <property type="RefSeq protein sequence ID" value="NP_062551.1"/>
</dbReference>
<dbReference type="UCSC" id="uc001hhy.4">
    <property type="organism name" value="human"/>
</dbReference>
<dbReference type="AGR" id="HGNC:25236"/>
<dbReference type="CTD" id="56256"/>
<dbReference type="DisGeNET" id="56256"/>
<dbReference type="GeneCards" id="SERTAD4"/>
<dbReference type="HGNC" id="HGNC:25236">
    <property type="gene designation" value="SERTAD4"/>
</dbReference>
<dbReference type="HPA" id="ENSG00000082497">
    <property type="expression patterns" value="Low tissue specificity"/>
</dbReference>
<dbReference type="neXtProt" id="NX_Q9NUC0"/>
<dbReference type="OpenTargets" id="ENSG00000082497"/>
<dbReference type="PharmGKB" id="PA134897438"/>
<dbReference type="VEuPathDB" id="HostDB:ENSG00000082497"/>
<dbReference type="eggNOG" id="ENOG502S9V2">
    <property type="taxonomic scope" value="Eukaryota"/>
</dbReference>
<dbReference type="GeneTree" id="ENSGT00530000063876"/>
<dbReference type="HOGENOM" id="CLU_069835_0_0_1"/>
<dbReference type="InParanoid" id="Q9NUC0"/>
<dbReference type="OMA" id="CSHQVDY"/>
<dbReference type="OrthoDB" id="5976204at2759"/>
<dbReference type="PAN-GO" id="Q9NUC0">
    <property type="GO annotations" value="0 GO annotations based on evolutionary models"/>
</dbReference>
<dbReference type="PhylomeDB" id="Q9NUC0"/>
<dbReference type="TreeFam" id="TF336235"/>
<dbReference type="PathwayCommons" id="Q9NUC0"/>
<dbReference type="SignaLink" id="Q9NUC0"/>
<dbReference type="BioGRID-ORCS" id="56256">
    <property type="hits" value="11 hits in 1146 CRISPR screens"/>
</dbReference>
<dbReference type="ChiTaRS" id="SERTAD4">
    <property type="organism name" value="human"/>
</dbReference>
<dbReference type="GenomeRNAi" id="56256"/>
<dbReference type="Pharos" id="Q9NUC0">
    <property type="development level" value="Tdark"/>
</dbReference>
<dbReference type="PRO" id="PR:Q9NUC0"/>
<dbReference type="Proteomes" id="UP000005640">
    <property type="component" value="Chromosome 1"/>
</dbReference>
<dbReference type="RNAct" id="Q9NUC0">
    <property type="molecule type" value="protein"/>
</dbReference>
<dbReference type="Bgee" id="ENSG00000082497">
    <property type="expression patterns" value="Expressed in calcaneal tendon and 108 other cell types or tissues"/>
</dbReference>
<dbReference type="GO" id="GO:0005634">
    <property type="term" value="C:nucleus"/>
    <property type="evidence" value="ECO:0007669"/>
    <property type="project" value="InterPro"/>
</dbReference>
<dbReference type="InterPro" id="IPR009263">
    <property type="entry name" value="SERTA_dom"/>
</dbReference>
<dbReference type="InterPro" id="IPR029708">
    <property type="entry name" value="SERTAD4"/>
</dbReference>
<dbReference type="PANTHER" id="PTHR14272">
    <property type="entry name" value="SERTA DOMAIN-CONTAINING PROTEIN 4"/>
    <property type="match status" value="1"/>
</dbReference>
<dbReference type="PANTHER" id="PTHR14272:SF4">
    <property type="entry name" value="SERTA DOMAIN-CONTAINING PROTEIN 4"/>
    <property type="match status" value="1"/>
</dbReference>
<dbReference type="Pfam" id="PF06031">
    <property type="entry name" value="SERTA"/>
    <property type="match status" value="1"/>
</dbReference>
<dbReference type="PROSITE" id="PS51053">
    <property type="entry name" value="SERTA"/>
    <property type="match status" value="1"/>
</dbReference>
<comment type="interaction">
    <interactant intactId="EBI-1773811">
        <id>Q9NUC0</id>
    </interactant>
    <interactant intactId="EBI-10226858">
        <id>Q0VDC6</id>
        <label>FKBP1A</label>
    </interactant>
    <organismsDiffer>false</organismsDiffer>
    <experiments>3</experiments>
</comment>
<comment type="interaction">
    <interactant intactId="EBI-1773811">
        <id>Q9NUC0</id>
    </interactant>
    <interactant intactId="EBI-356991">
        <id>P54652</id>
        <label>HSPA2</label>
    </interactant>
    <organismsDiffer>false</organismsDiffer>
    <experiments>3</experiments>
</comment>
<comment type="interaction">
    <interactant intactId="EBI-1773811">
        <id>Q9NUC0</id>
    </interactant>
    <interactant intactId="EBI-1053431">
        <id>P49591</id>
        <label>SARS1</label>
    </interactant>
    <organismsDiffer>false</organismsDiffer>
    <experiments>3</experiments>
</comment>
<name>SRTD4_HUMAN</name>
<keyword id="KW-1267">Proteomics identification</keyword>
<keyword id="KW-1185">Reference proteome</keyword>
<sequence length="356" mass="39348">MTLVLSMNRFCEPIVSEGAAEIAGYQTLWEADSYGGPSPPGPAQAPLQGDRGAGPPLAGSHYRGISNPITTSKITYFKRKYVEEEDFHPPLSSCSHKTISIFEERAHILYMSLEKLKFIDDPEVYLRRSVLINNLMKRIHGEIIMQNNWCFPACSFNGTSAQEWFMAQDCPYRKRPRMAKEECEKFHACCFYQECGGHYLNLPLSVNANVGSASTAASSPSASSSSSSSSSSPPLPLPSCSRQVDFDVGSASIYKSDGQIPANEIFVTNVRSLGVQEKAKLNDEKANDDTNRDGGPLSHEPVGNDLAFECKGQFYDYFETGYNERNNVNESWKKSLRKKEASPPSNKLCCSKGSKI</sequence>